<evidence type="ECO:0000250" key="1">
    <source>
        <dbReference type="UniProtKB" id="P02470"/>
    </source>
</evidence>
<evidence type="ECO:0000250" key="2">
    <source>
        <dbReference type="UniProtKB" id="P02489"/>
    </source>
</evidence>
<evidence type="ECO:0000255" key="3">
    <source>
        <dbReference type="PROSITE-ProRule" id="PRU00285"/>
    </source>
</evidence>
<evidence type="ECO:0000256" key="4">
    <source>
        <dbReference type="SAM" id="MobiDB-lite"/>
    </source>
</evidence>
<evidence type="ECO:0000269" key="5">
    <source>
    </source>
</evidence>
<feature type="chain" id="PRO_0000125897" description="Alpha-crystallin A chain">
    <location>
        <begin position="1"/>
        <end position="173"/>
    </location>
</feature>
<feature type="domain" description="sHSP" evidence="3">
    <location>
        <begin position="52"/>
        <end position="164"/>
    </location>
</feature>
<feature type="region of interest" description="Disordered" evidence="4">
    <location>
        <begin position="152"/>
        <end position="173"/>
    </location>
</feature>
<feature type="compositionally biased region" description="Basic and acidic residues" evidence="4">
    <location>
        <begin position="153"/>
        <end position="167"/>
    </location>
</feature>
<feature type="binding site" evidence="1">
    <location>
        <position position="100"/>
    </location>
    <ligand>
        <name>Zn(2+)</name>
        <dbReference type="ChEBI" id="CHEBI:29105"/>
        <label>1</label>
    </ligand>
</feature>
<feature type="binding site" evidence="1">
    <location>
        <position position="102"/>
    </location>
    <ligand>
        <name>Zn(2+)</name>
        <dbReference type="ChEBI" id="CHEBI:29105"/>
        <label>1</label>
    </ligand>
</feature>
<feature type="binding site" evidence="1">
    <location>
        <position position="107"/>
    </location>
    <ligand>
        <name>Zn(2+)</name>
        <dbReference type="ChEBI" id="CHEBI:29105"/>
        <label>2</label>
    </ligand>
</feature>
<feature type="binding site" evidence="1">
    <location>
        <position position="154"/>
    </location>
    <ligand>
        <name>Zn(2+)</name>
        <dbReference type="ChEBI" id="CHEBI:29105"/>
        <label>3</label>
    </ligand>
</feature>
<feature type="modified residue" description="N-acetylmethionine" evidence="5">
    <location>
        <position position="1"/>
    </location>
</feature>
<accession>P06904</accession>
<dbReference type="PIR" id="A25753">
    <property type="entry name" value="CYAQAA"/>
</dbReference>
<dbReference type="SMR" id="P06904"/>
<dbReference type="iPTMnet" id="P06904"/>
<dbReference type="eggNOG" id="KOG3591">
    <property type="taxonomic scope" value="Eukaryota"/>
</dbReference>
<dbReference type="GO" id="GO:0005737">
    <property type="term" value="C:cytoplasm"/>
    <property type="evidence" value="ECO:0007669"/>
    <property type="project" value="UniProtKB-SubCell"/>
</dbReference>
<dbReference type="GO" id="GO:0005634">
    <property type="term" value="C:nucleus"/>
    <property type="evidence" value="ECO:0007669"/>
    <property type="project" value="UniProtKB-SubCell"/>
</dbReference>
<dbReference type="GO" id="GO:0046872">
    <property type="term" value="F:metal ion binding"/>
    <property type="evidence" value="ECO:0007669"/>
    <property type="project" value="UniProtKB-KW"/>
</dbReference>
<dbReference type="GO" id="GO:0005212">
    <property type="term" value="F:structural constituent of eye lens"/>
    <property type="evidence" value="ECO:0007669"/>
    <property type="project" value="UniProtKB-KW"/>
</dbReference>
<dbReference type="GO" id="GO:0051082">
    <property type="term" value="F:unfolded protein binding"/>
    <property type="evidence" value="ECO:0007669"/>
    <property type="project" value="TreeGrafter"/>
</dbReference>
<dbReference type="GO" id="GO:0002088">
    <property type="term" value="P:lens development in camera-type eye"/>
    <property type="evidence" value="ECO:0007669"/>
    <property type="project" value="TreeGrafter"/>
</dbReference>
<dbReference type="GO" id="GO:0043066">
    <property type="term" value="P:negative regulation of apoptotic process"/>
    <property type="evidence" value="ECO:0007669"/>
    <property type="project" value="TreeGrafter"/>
</dbReference>
<dbReference type="GO" id="GO:0042026">
    <property type="term" value="P:protein refolding"/>
    <property type="evidence" value="ECO:0007669"/>
    <property type="project" value="TreeGrafter"/>
</dbReference>
<dbReference type="GO" id="GO:0009408">
    <property type="term" value="P:response to heat"/>
    <property type="evidence" value="ECO:0007669"/>
    <property type="project" value="TreeGrafter"/>
</dbReference>
<dbReference type="FunFam" id="2.60.40.790:FF:000008">
    <property type="entry name" value="Alpha-crystallin A chain"/>
    <property type="match status" value="1"/>
</dbReference>
<dbReference type="Gene3D" id="2.60.40.790">
    <property type="match status" value="1"/>
</dbReference>
<dbReference type="InterPro" id="IPR002068">
    <property type="entry name" value="A-crystallin/Hsp20_dom"/>
</dbReference>
<dbReference type="InterPro" id="IPR055269">
    <property type="entry name" value="Alpha-crystallin/HSP_16"/>
</dbReference>
<dbReference type="InterPro" id="IPR001436">
    <property type="entry name" value="Alpha-crystallin/sHSP_animal"/>
</dbReference>
<dbReference type="InterPro" id="IPR003090">
    <property type="entry name" value="Alpha-crystallin_N"/>
</dbReference>
<dbReference type="InterPro" id="IPR008978">
    <property type="entry name" value="HSP20-like_chaperone"/>
</dbReference>
<dbReference type="PANTHER" id="PTHR45640:SF14">
    <property type="entry name" value="ALPHA-CRYSTALLIN A CHAIN"/>
    <property type="match status" value="1"/>
</dbReference>
<dbReference type="PANTHER" id="PTHR45640">
    <property type="entry name" value="HEAT SHOCK PROTEIN HSP-12.2-RELATED"/>
    <property type="match status" value="1"/>
</dbReference>
<dbReference type="Pfam" id="PF00525">
    <property type="entry name" value="Crystallin"/>
    <property type="match status" value="1"/>
</dbReference>
<dbReference type="Pfam" id="PF00011">
    <property type="entry name" value="HSP20"/>
    <property type="match status" value="1"/>
</dbReference>
<dbReference type="PIRSF" id="PIRSF036514">
    <property type="entry name" value="Sm_HSP_B1"/>
    <property type="match status" value="1"/>
</dbReference>
<dbReference type="PRINTS" id="PR00299">
    <property type="entry name" value="ACRYSTALLIN"/>
</dbReference>
<dbReference type="SUPFAM" id="SSF49764">
    <property type="entry name" value="HSP20-like chaperones"/>
    <property type="match status" value="1"/>
</dbReference>
<dbReference type="PROSITE" id="PS01031">
    <property type="entry name" value="SHSP"/>
    <property type="match status" value="1"/>
</dbReference>
<reference key="1">
    <citation type="journal article" date="1985" name="Mol. Biol. Evol.">
        <title>Alpha-crystallin A sequences of Alligator mississippiensis and the lizard Tupinambis teguixin: molecular evolution and reptilian phylogeny.</title>
        <authorList>
            <person name="de Jong W.W."/>
            <person name="Zweers A."/>
            <person name="Versteeg M."/>
            <person name="Dessauer H.C."/>
            <person name="Goodman M."/>
        </authorList>
    </citation>
    <scope>PARTIAL PROTEIN SEQUENCE</scope>
    <scope>ACETYLATION AT MET-1</scope>
</reference>
<keyword id="KW-0007">Acetylation</keyword>
<keyword id="KW-0963">Cytoplasm</keyword>
<keyword id="KW-0903">Direct protein sequencing</keyword>
<keyword id="KW-0273">Eye lens protein</keyword>
<keyword id="KW-0479">Metal-binding</keyword>
<keyword id="KW-0539">Nucleus</keyword>
<keyword id="KW-0862">Zinc</keyword>
<name>CRYAA_ALLMI</name>
<comment type="function">
    <text evidence="2">Contributes to the transparency and refractive index of the lens. May act as a chaperone, preventing aggregation of various proteins under a wide range of stress conditions.</text>
</comment>
<comment type="subunit">
    <text evidence="1 2">Heteropolymer composed of three CRYAA and one CRYAB subunits (By similarity). Inter-subunit bridging via zinc ions enhances stability, which is crucial as there is no protein turn over in the lens. Can also form homodimers and homotetramers (dimers of dimers) which serve as the building blocks of homooligomers (By similarity). Within homooligomers, the zinc-binding motif is created from residues of 3 different molecules. His-100 and Glu-102 from one molecule are ligands of the zinc ion, and His-107 and His-154 residues from additional molecules complete the site with tetrahedral coordination geometry (By similarity).</text>
</comment>
<comment type="subcellular location">
    <subcellularLocation>
        <location evidence="2">Cytoplasm</location>
    </subcellularLocation>
    <subcellularLocation>
        <location evidence="2">Nucleus</location>
    </subcellularLocation>
    <text evidence="2">Translocates to the nucleus during heat shock.</text>
</comment>
<comment type="similarity">
    <text evidence="3">Belongs to the small heat shock protein (HSP20) family.</text>
</comment>
<organism>
    <name type="scientific">Alligator mississippiensis</name>
    <name type="common">American alligator</name>
    <dbReference type="NCBI Taxonomy" id="8496"/>
    <lineage>
        <taxon>Eukaryota</taxon>
        <taxon>Metazoa</taxon>
        <taxon>Chordata</taxon>
        <taxon>Craniata</taxon>
        <taxon>Vertebrata</taxon>
        <taxon>Euteleostomi</taxon>
        <taxon>Archelosauria</taxon>
        <taxon>Archosauria</taxon>
        <taxon>Crocodylia</taxon>
        <taxon>Alligatoridae</taxon>
        <taxon>Alligatorinae</taxon>
        <taxon>Alligator</taxon>
    </lineage>
</organism>
<proteinExistence type="evidence at protein level"/>
<protein>
    <recommendedName>
        <fullName>Alpha-crystallin A chain</fullName>
    </recommendedName>
</protein>
<sequence>MDITIQHPWFKRALGPLIPSRLFDQFFGEGLFEYDLLPLLSSTISPYYRHSLFRSVLESGISEVRSDRDKFTIMLDVKHFSPEDLSVKIIDDFVEVHGKHNERQDDHGYISREFHRRYRLPSSVDQSAVTCVLSADGMLTFSGSKVQSNVDTIHSDRPIPVAREEKPTSAPSS</sequence>
<gene>
    <name type="primary">CRYAA</name>
</gene>